<organism>
    <name type="scientific">Gloeobacter violaceus (strain ATCC 29082 / PCC 7421)</name>
    <dbReference type="NCBI Taxonomy" id="251221"/>
    <lineage>
        <taxon>Bacteria</taxon>
        <taxon>Bacillati</taxon>
        <taxon>Cyanobacteriota</taxon>
        <taxon>Cyanophyceae</taxon>
        <taxon>Gloeobacterales</taxon>
        <taxon>Gloeobacteraceae</taxon>
        <taxon>Gloeobacter</taxon>
    </lineage>
</organism>
<reference key="1">
    <citation type="journal article" date="2003" name="DNA Res.">
        <title>Complete genome structure of Gloeobacter violaceus PCC 7421, a cyanobacterium that lacks thylakoids.</title>
        <authorList>
            <person name="Nakamura Y."/>
            <person name="Kaneko T."/>
            <person name="Sato S."/>
            <person name="Mimuro M."/>
            <person name="Miyashita H."/>
            <person name="Tsuchiya T."/>
            <person name="Sasamoto S."/>
            <person name="Watanabe A."/>
            <person name="Kawashima K."/>
            <person name="Kishida Y."/>
            <person name="Kiyokawa C."/>
            <person name="Kohara M."/>
            <person name="Matsumoto M."/>
            <person name="Matsuno A."/>
            <person name="Nakazaki N."/>
            <person name="Shimpo S."/>
            <person name="Takeuchi C."/>
            <person name="Yamada M."/>
            <person name="Tabata S."/>
        </authorList>
    </citation>
    <scope>NUCLEOTIDE SEQUENCE [LARGE SCALE GENOMIC DNA]</scope>
    <source>
        <strain>ATCC 29082 / PCC 7421</strain>
    </source>
</reference>
<gene>
    <name evidence="1" type="primary">panD1</name>
    <name type="ordered locus">glr2845</name>
</gene>
<evidence type="ECO:0000255" key="1">
    <source>
        <dbReference type="HAMAP-Rule" id="MF_00446"/>
    </source>
</evidence>
<feature type="chain" id="PRO_0000023085" description="Aspartate 1-decarboxylase beta chain" evidence="1">
    <location>
        <begin position="1"/>
        <end position="24"/>
    </location>
</feature>
<feature type="chain" id="PRO_0000023086" description="Aspartate 1-decarboxylase alpha chain" evidence="1">
    <location>
        <begin position="25"/>
        <end position="118"/>
    </location>
</feature>
<feature type="active site" description="Schiff-base intermediate with substrate; via pyruvic acid" evidence="1">
    <location>
        <position position="25"/>
    </location>
</feature>
<feature type="active site" description="Proton donor" evidence="1">
    <location>
        <position position="58"/>
    </location>
</feature>
<feature type="binding site" evidence="1">
    <location>
        <position position="57"/>
    </location>
    <ligand>
        <name>substrate</name>
    </ligand>
</feature>
<feature type="binding site" evidence="1">
    <location>
        <begin position="73"/>
        <end position="75"/>
    </location>
    <ligand>
        <name>substrate</name>
    </ligand>
</feature>
<feature type="modified residue" description="Pyruvic acid (Ser)" evidence="1">
    <location>
        <position position="25"/>
    </location>
</feature>
<accession>Q7NCY1</accession>
<comment type="function">
    <text evidence="1">Catalyzes the pyruvoyl-dependent decarboxylation of aspartate to produce beta-alanine.</text>
</comment>
<comment type="catalytic activity">
    <reaction evidence="1">
        <text>L-aspartate + H(+) = beta-alanine + CO2</text>
        <dbReference type="Rhea" id="RHEA:19497"/>
        <dbReference type="ChEBI" id="CHEBI:15378"/>
        <dbReference type="ChEBI" id="CHEBI:16526"/>
        <dbReference type="ChEBI" id="CHEBI:29991"/>
        <dbReference type="ChEBI" id="CHEBI:57966"/>
        <dbReference type="EC" id="4.1.1.11"/>
    </reaction>
</comment>
<comment type="cofactor">
    <cofactor evidence="1">
        <name>pyruvate</name>
        <dbReference type="ChEBI" id="CHEBI:15361"/>
    </cofactor>
    <text evidence="1">Binds 1 pyruvoyl group covalently per subunit.</text>
</comment>
<comment type="pathway">
    <text evidence="1">Cofactor biosynthesis; (R)-pantothenate biosynthesis; beta-alanine from L-aspartate: step 1/1.</text>
</comment>
<comment type="subunit">
    <text evidence="1">Heterooctamer of four alpha and four beta subunits.</text>
</comment>
<comment type="subcellular location">
    <subcellularLocation>
        <location evidence="1">Cytoplasm</location>
    </subcellularLocation>
</comment>
<comment type="PTM">
    <text evidence="1">Is synthesized initially as an inactive proenzyme, which is activated by self-cleavage at a specific serine bond to produce a beta-subunit with a hydroxyl group at its C-terminus and an alpha-subunit with a pyruvoyl group at its N-terminus.</text>
</comment>
<comment type="similarity">
    <text evidence="1">Belongs to the PanD family.</text>
</comment>
<proteinExistence type="inferred from homology"/>
<name>PAND1_GLOVI</name>
<dbReference type="EC" id="4.1.1.11" evidence="1"/>
<dbReference type="EMBL" id="BA000045">
    <property type="protein sequence ID" value="BAC90786.1"/>
    <property type="molecule type" value="Genomic_DNA"/>
</dbReference>
<dbReference type="RefSeq" id="NP_925791.1">
    <property type="nucleotide sequence ID" value="NC_005125.1"/>
</dbReference>
<dbReference type="RefSeq" id="WP_011142839.1">
    <property type="nucleotide sequence ID" value="NC_005125.1"/>
</dbReference>
<dbReference type="SMR" id="Q7NCY1"/>
<dbReference type="FunCoup" id="Q7NCY1">
    <property type="interactions" value="93"/>
</dbReference>
<dbReference type="STRING" id="251221.gene:10760349"/>
<dbReference type="EnsemblBacteria" id="BAC90786">
    <property type="protein sequence ID" value="BAC90786"/>
    <property type="gene ID" value="BAC90786"/>
</dbReference>
<dbReference type="KEGG" id="gvi:glr2845"/>
<dbReference type="PATRIC" id="fig|251221.4.peg.2875"/>
<dbReference type="eggNOG" id="COG0853">
    <property type="taxonomic scope" value="Bacteria"/>
</dbReference>
<dbReference type="HOGENOM" id="CLU_115305_2_0_3"/>
<dbReference type="InParanoid" id="Q7NCY1"/>
<dbReference type="OrthoDB" id="9803983at2"/>
<dbReference type="PhylomeDB" id="Q7NCY1"/>
<dbReference type="UniPathway" id="UPA00028">
    <property type="reaction ID" value="UER00002"/>
</dbReference>
<dbReference type="Proteomes" id="UP000000557">
    <property type="component" value="Chromosome"/>
</dbReference>
<dbReference type="GO" id="GO:0005829">
    <property type="term" value="C:cytosol"/>
    <property type="evidence" value="ECO:0000318"/>
    <property type="project" value="GO_Central"/>
</dbReference>
<dbReference type="GO" id="GO:0004068">
    <property type="term" value="F:aspartate 1-decarboxylase activity"/>
    <property type="evidence" value="ECO:0000318"/>
    <property type="project" value="GO_Central"/>
</dbReference>
<dbReference type="GO" id="GO:0006523">
    <property type="term" value="P:alanine biosynthetic process"/>
    <property type="evidence" value="ECO:0000318"/>
    <property type="project" value="GO_Central"/>
</dbReference>
<dbReference type="GO" id="GO:0015940">
    <property type="term" value="P:pantothenate biosynthetic process"/>
    <property type="evidence" value="ECO:0000318"/>
    <property type="project" value="GO_Central"/>
</dbReference>
<dbReference type="CDD" id="cd06919">
    <property type="entry name" value="Asp_decarbox"/>
    <property type="match status" value="1"/>
</dbReference>
<dbReference type="Gene3D" id="2.40.40.20">
    <property type="match status" value="1"/>
</dbReference>
<dbReference type="HAMAP" id="MF_00446">
    <property type="entry name" value="PanD"/>
    <property type="match status" value="1"/>
</dbReference>
<dbReference type="InterPro" id="IPR009010">
    <property type="entry name" value="Asp_de-COase-like_dom_sf"/>
</dbReference>
<dbReference type="InterPro" id="IPR003190">
    <property type="entry name" value="Asp_decarbox"/>
</dbReference>
<dbReference type="NCBIfam" id="TIGR00223">
    <property type="entry name" value="panD"/>
    <property type="match status" value="1"/>
</dbReference>
<dbReference type="PANTHER" id="PTHR21012">
    <property type="entry name" value="ASPARTATE 1-DECARBOXYLASE"/>
    <property type="match status" value="1"/>
</dbReference>
<dbReference type="PANTHER" id="PTHR21012:SF0">
    <property type="entry name" value="ASPARTATE 1-DECARBOXYLASE"/>
    <property type="match status" value="1"/>
</dbReference>
<dbReference type="Pfam" id="PF02261">
    <property type="entry name" value="Asp_decarbox"/>
    <property type="match status" value="1"/>
</dbReference>
<dbReference type="PIRSF" id="PIRSF006246">
    <property type="entry name" value="Asp_decarbox"/>
    <property type="match status" value="1"/>
</dbReference>
<dbReference type="SUPFAM" id="SSF50692">
    <property type="entry name" value="ADC-like"/>
    <property type="match status" value="1"/>
</dbReference>
<sequence>MLRTVLLSKIHRATVTGACLEYMGSISLDAQLLAAAHILAFEQVHVVNLNNGARLITYAIEATAGSGAVVLNGAAARLAAPGDRVIVLAYGQGTTEELENHQPRVVHVDTGNRIVACV</sequence>
<protein>
    <recommendedName>
        <fullName evidence="1">Aspartate 1-decarboxylase 1</fullName>
        <ecNumber evidence="1">4.1.1.11</ecNumber>
    </recommendedName>
    <alternativeName>
        <fullName evidence="1">Aspartate alpha-decarboxylase 1</fullName>
    </alternativeName>
    <component>
        <recommendedName>
            <fullName evidence="1">Aspartate 1-decarboxylase beta chain</fullName>
        </recommendedName>
    </component>
    <component>
        <recommendedName>
            <fullName evidence="1">Aspartate 1-decarboxylase alpha chain</fullName>
        </recommendedName>
    </component>
</protein>
<keyword id="KW-0068">Autocatalytic cleavage</keyword>
<keyword id="KW-0963">Cytoplasm</keyword>
<keyword id="KW-0210">Decarboxylase</keyword>
<keyword id="KW-0456">Lyase</keyword>
<keyword id="KW-0566">Pantothenate biosynthesis</keyword>
<keyword id="KW-0670">Pyruvate</keyword>
<keyword id="KW-1185">Reference proteome</keyword>
<keyword id="KW-0704">Schiff base</keyword>
<keyword id="KW-0865">Zymogen</keyword>